<protein>
    <recommendedName>
        <fullName evidence="1">Large ribosomal subunit protein uL6</fullName>
    </recommendedName>
    <alternativeName>
        <fullName evidence="2">50S ribosomal protein L6</fullName>
    </alternativeName>
</protein>
<dbReference type="EMBL" id="CP001612">
    <property type="protein sequence ID" value="ACP53752.1"/>
    <property type="molecule type" value="Genomic_DNA"/>
</dbReference>
<dbReference type="RefSeq" id="WP_012719916.1">
    <property type="nucleotide sequence ID" value="NC_012633.1"/>
</dbReference>
<dbReference type="SMR" id="C3PP92"/>
<dbReference type="KEGG" id="raf:RAF_ORF0897"/>
<dbReference type="HOGENOM" id="CLU_065464_1_2_5"/>
<dbReference type="Proteomes" id="UP000002305">
    <property type="component" value="Chromosome"/>
</dbReference>
<dbReference type="GO" id="GO:1990904">
    <property type="term" value="C:ribonucleoprotein complex"/>
    <property type="evidence" value="ECO:0007669"/>
    <property type="project" value="UniProtKB-KW"/>
</dbReference>
<dbReference type="GO" id="GO:0005840">
    <property type="term" value="C:ribosome"/>
    <property type="evidence" value="ECO:0007669"/>
    <property type="project" value="UniProtKB-KW"/>
</dbReference>
<dbReference type="GO" id="GO:0019843">
    <property type="term" value="F:rRNA binding"/>
    <property type="evidence" value="ECO:0007669"/>
    <property type="project" value="UniProtKB-UniRule"/>
</dbReference>
<dbReference type="GO" id="GO:0003735">
    <property type="term" value="F:structural constituent of ribosome"/>
    <property type="evidence" value="ECO:0007669"/>
    <property type="project" value="InterPro"/>
</dbReference>
<dbReference type="GO" id="GO:0002181">
    <property type="term" value="P:cytoplasmic translation"/>
    <property type="evidence" value="ECO:0007669"/>
    <property type="project" value="TreeGrafter"/>
</dbReference>
<dbReference type="Gene3D" id="3.90.930.12">
    <property type="entry name" value="Ribosomal protein L6, alpha-beta domain"/>
    <property type="match status" value="2"/>
</dbReference>
<dbReference type="HAMAP" id="MF_01365_B">
    <property type="entry name" value="Ribosomal_uL6_B"/>
    <property type="match status" value="1"/>
</dbReference>
<dbReference type="InterPro" id="IPR000702">
    <property type="entry name" value="Ribosomal_uL6-like"/>
</dbReference>
<dbReference type="InterPro" id="IPR036789">
    <property type="entry name" value="Ribosomal_uL6-like_a/b-dom_sf"/>
</dbReference>
<dbReference type="InterPro" id="IPR020040">
    <property type="entry name" value="Ribosomal_uL6_a/b-dom"/>
</dbReference>
<dbReference type="InterPro" id="IPR019906">
    <property type="entry name" value="Ribosomal_uL6_bac-type"/>
</dbReference>
<dbReference type="InterPro" id="IPR002358">
    <property type="entry name" value="Ribosomal_uL6_CS"/>
</dbReference>
<dbReference type="NCBIfam" id="TIGR03654">
    <property type="entry name" value="L6_bact"/>
    <property type="match status" value="1"/>
</dbReference>
<dbReference type="PANTHER" id="PTHR11655">
    <property type="entry name" value="60S/50S RIBOSOMAL PROTEIN L6/L9"/>
    <property type="match status" value="1"/>
</dbReference>
<dbReference type="PANTHER" id="PTHR11655:SF14">
    <property type="entry name" value="LARGE RIBOSOMAL SUBUNIT PROTEIN UL6M"/>
    <property type="match status" value="1"/>
</dbReference>
<dbReference type="Pfam" id="PF00347">
    <property type="entry name" value="Ribosomal_L6"/>
    <property type="match status" value="2"/>
</dbReference>
<dbReference type="PIRSF" id="PIRSF002162">
    <property type="entry name" value="Ribosomal_L6"/>
    <property type="match status" value="1"/>
</dbReference>
<dbReference type="PRINTS" id="PR00059">
    <property type="entry name" value="RIBOSOMALL6"/>
</dbReference>
<dbReference type="SUPFAM" id="SSF56053">
    <property type="entry name" value="Ribosomal protein L6"/>
    <property type="match status" value="2"/>
</dbReference>
<dbReference type="PROSITE" id="PS00525">
    <property type="entry name" value="RIBOSOMAL_L6_1"/>
    <property type="match status" value="1"/>
</dbReference>
<keyword id="KW-0687">Ribonucleoprotein</keyword>
<keyword id="KW-0689">Ribosomal protein</keyword>
<keyword id="KW-0694">RNA-binding</keyword>
<keyword id="KW-0699">rRNA-binding</keyword>
<gene>
    <name evidence="1" type="primary">rplF</name>
    <name type="ordered locus">RAF_ORF0897</name>
</gene>
<proteinExistence type="inferred from homology"/>
<reference key="1">
    <citation type="journal article" date="2009" name="BMC Genomics">
        <title>Analysis of the Rickettsia africae genome reveals that virulence acquisition in Rickettsia species may be explained by genome reduction.</title>
        <authorList>
            <person name="Fournier P.-E."/>
            <person name="El Karkouri K."/>
            <person name="Leroy Q."/>
            <person name="Robert C."/>
            <person name="Giumelli B."/>
            <person name="Renesto P."/>
            <person name="Socolovschi C."/>
            <person name="Parola P."/>
            <person name="Audic S."/>
            <person name="Raoult D."/>
        </authorList>
    </citation>
    <scope>NUCLEOTIDE SEQUENCE [LARGE SCALE GENOMIC DNA]</scope>
    <source>
        <strain>ESF-5</strain>
    </source>
</reference>
<organism>
    <name type="scientific">Rickettsia africae (strain ESF-5)</name>
    <dbReference type="NCBI Taxonomy" id="347255"/>
    <lineage>
        <taxon>Bacteria</taxon>
        <taxon>Pseudomonadati</taxon>
        <taxon>Pseudomonadota</taxon>
        <taxon>Alphaproteobacteria</taxon>
        <taxon>Rickettsiales</taxon>
        <taxon>Rickettsiaceae</taxon>
        <taxon>Rickettsieae</taxon>
        <taxon>Rickettsia</taxon>
        <taxon>spotted fever group</taxon>
    </lineage>
</organism>
<accession>C3PP92</accession>
<feature type="chain" id="PRO_1000214935" description="Large ribosomal subunit protein uL6">
    <location>
        <begin position="1"/>
        <end position="177"/>
    </location>
</feature>
<evidence type="ECO:0000255" key="1">
    <source>
        <dbReference type="HAMAP-Rule" id="MF_01365"/>
    </source>
</evidence>
<evidence type="ECO:0000305" key="2"/>
<name>RL6_RICAE</name>
<sequence>MSRVGKLPITIPEGIKIGLNDLEVKISGPKGELSKTFKGNIAISLAENKLLVKPLAANKNARAMWGTARSIISNMVTGVKEGFKLKLEINGVGYRAMVKGKYLNLMLAKSHNTKIEIPSDIKIEVPKQNIIILEGTDKEKLGQFASIIIKQRPPEPYKGKGIKFENQFIPRKEGKKN</sequence>
<comment type="function">
    <text evidence="1">This protein binds to the 23S rRNA, and is important in its secondary structure. It is located near the subunit interface in the base of the L7/L12 stalk, and near the tRNA binding site of the peptidyltransferase center.</text>
</comment>
<comment type="subunit">
    <text evidence="1">Part of the 50S ribosomal subunit.</text>
</comment>
<comment type="similarity">
    <text evidence="1">Belongs to the universal ribosomal protein uL6 family.</text>
</comment>